<gene>
    <name evidence="1" type="primary">pgk</name>
    <name type="ordered locus">YE3414</name>
</gene>
<accession>A1JPR0</accession>
<reference key="1">
    <citation type="journal article" date="2006" name="PLoS Genet.">
        <title>The complete genome sequence and comparative genome analysis of the high pathogenicity Yersinia enterocolitica strain 8081.</title>
        <authorList>
            <person name="Thomson N.R."/>
            <person name="Howard S."/>
            <person name="Wren B.W."/>
            <person name="Holden M.T.G."/>
            <person name="Crossman L."/>
            <person name="Challis G.L."/>
            <person name="Churcher C."/>
            <person name="Mungall K."/>
            <person name="Brooks K."/>
            <person name="Chillingworth T."/>
            <person name="Feltwell T."/>
            <person name="Abdellah Z."/>
            <person name="Hauser H."/>
            <person name="Jagels K."/>
            <person name="Maddison M."/>
            <person name="Moule S."/>
            <person name="Sanders M."/>
            <person name="Whitehead S."/>
            <person name="Quail M.A."/>
            <person name="Dougan G."/>
            <person name="Parkhill J."/>
            <person name="Prentice M.B."/>
        </authorList>
    </citation>
    <scope>NUCLEOTIDE SEQUENCE [LARGE SCALE GENOMIC DNA]</scope>
    <source>
        <strain>NCTC 13174 / 8081</strain>
    </source>
</reference>
<comment type="catalytic activity">
    <reaction evidence="1">
        <text>(2R)-3-phosphoglycerate + ATP = (2R)-3-phospho-glyceroyl phosphate + ADP</text>
        <dbReference type="Rhea" id="RHEA:14801"/>
        <dbReference type="ChEBI" id="CHEBI:30616"/>
        <dbReference type="ChEBI" id="CHEBI:57604"/>
        <dbReference type="ChEBI" id="CHEBI:58272"/>
        <dbReference type="ChEBI" id="CHEBI:456216"/>
        <dbReference type="EC" id="2.7.2.3"/>
    </reaction>
</comment>
<comment type="pathway">
    <text evidence="1">Carbohydrate degradation; glycolysis; pyruvate from D-glyceraldehyde 3-phosphate: step 2/5.</text>
</comment>
<comment type="subunit">
    <text evidence="1">Monomer.</text>
</comment>
<comment type="subcellular location">
    <subcellularLocation>
        <location evidence="1">Cytoplasm</location>
    </subcellularLocation>
</comment>
<comment type="similarity">
    <text evidence="1">Belongs to the phosphoglycerate kinase family.</text>
</comment>
<evidence type="ECO:0000255" key="1">
    <source>
        <dbReference type="HAMAP-Rule" id="MF_00145"/>
    </source>
</evidence>
<proteinExistence type="inferred from homology"/>
<name>PGK_YERE8</name>
<feature type="chain" id="PRO_1000058095" description="Phosphoglycerate kinase">
    <location>
        <begin position="1"/>
        <end position="387"/>
    </location>
</feature>
<feature type="binding site" evidence="1">
    <location>
        <begin position="21"/>
        <end position="23"/>
    </location>
    <ligand>
        <name>substrate</name>
    </ligand>
</feature>
<feature type="binding site" evidence="1">
    <location>
        <position position="36"/>
    </location>
    <ligand>
        <name>substrate</name>
    </ligand>
</feature>
<feature type="binding site" evidence="1">
    <location>
        <begin position="59"/>
        <end position="62"/>
    </location>
    <ligand>
        <name>substrate</name>
    </ligand>
</feature>
<feature type="binding site" evidence="1">
    <location>
        <position position="113"/>
    </location>
    <ligand>
        <name>substrate</name>
    </ligand>
</feature>
<feature type="binding site" evidence="1">
    <location>
        <position position="146"/>
    </location>
    <ligand>
        <name>substrate</name>
    </ligand>
</feature>
<feature type="binding site" evidence="1">
    <location>
        <position position="197"/>
    </location>
    <ligand>
        <name>ATP</name>
        <dbReference type="ChEBI" id="CHEBI:30616"/>
    </ligand>
</feature>
<feature type="binding site" evidence="1">
    <location>
        <position position="314"/>
    </location>
    <ligand>
        <name>ATP</name>
        <dbReference type="ChEBI" id="CHEBI:30616"/>
    </ligand>
</feature>
<feature type="binding site" evidence="1">
    <location>
        <begin position="340"/>
        <end position="343"/>
    </location>
    <ligand>
        <name>ATP</name>
        <dbReference type="ChEBI" id="CHEBI:30616"/>
    </ligand>
</feature>
<dbReference type="EC" id="2.7.2.3" evidence="1"/>
<dbReference type="EMBL" id="AM286415">
    <property type="protein sequence ID" value="CAL13438.1"/>
    <property type="molecule type" value="Genomic_DNA"/>
</dbReference>
<dbReference type="RefSeq" id="WP_005157067.1">
    <property type="nucleotide sequence ID" value="NC_008800.1"/>
</dbReference>
<dbReference type="RefSeq" id="YP_001007580.1">
    <property type="nucleotide sequence ID" value="NC_008800.1"/>
</dbReference>
<dbReference type="SMR" id="A1JPR0"/>
<dbReference type="GeneID" id="31410328"/>
<dbReference type="KEGG" id="yen:YE3414"/>
<dbReference type="PATRIC" id="fig|393305.7.peg.3625"/>
<dbReference type="eggNOG" id="COG0126">
    <property type="taxonomic scope" value="Bacteria"/>
</dbReference>
<dbReference type="HOGENOM" id="CLU_025427_0_2_6"/>
<dbReference type="OrthoDB" id="9808460at2"/>
<dbReference type="UniPathway" id="UPA00109">
    <property type="reaction ID" value="UER00185"/>
</dbReference>
<dbReference type="Proteomes" id="UP000000642">
    <property type="component" value="Chromosome"/>
</dbReference>
<dbReference type="GO" id="GO:0005829">
    <property type="term" value="C:cytosol"/>
    <property type="evidence" value="ECO:0007669"/>
    <property type="project" value="TreeGrafter"/>
</dbReference>
<dbReference type="GO" id="GO:0043531">
    <property type="term" value="F:ADP binding"/>
    <property type="evidence" value="ECO:0007669"/>
    <property type="project" value="TreeGrafter"/>
</dbReference>
<dbReference type="GO" id="GO:0005524">
    <property type="term" value="F:ATP binding"/>
    <property type="evidence" value="ECO:0007669"/>
    <property type="project" value="UniProtKB-KW"/>
</dbReference>
<dbReference type="GO" id="GO:0004618">
    <property type="term" value="F:phosphoglycerate kinase activity"/>
    <property type="evidence" value="ECO:0007669"/>
    <property type="project" value="UniProtKB-UniRule"/>
</dbReference>
<dbReference type="GO" id="GO:0006094">
    <property type="term" value="P:gluconeogenesis"/>
    <property type="evidence" value="ECO:0007669"/>
    <property type="project" value="TreeGrafter"/>
</dbReference>
<dbReference type="GO" id="GO:0006096">
    <property type="term" value="P:glycolytic process"/>
    <property type="evidence" value="ECO:0007669"/>
    <property type="project" value="UniProtKB-UniRule"/>
</dbReference>
<dbReference type="FunFam" id="3.40.50.1260:FF:000001">
    <property type="entry name" value="Phosphoglycerate kinase"/>
    <property type="match status" value="1"/>
</dbReference>
<dbReference type="FunFam" id="3.40.50.1260:FF:000002">
    <property type="entry name" value="Phosphoglycerate kinase"/>
    <property type="match status" value="1"/>
</dbReference>
<dbReference type="Gene3D" id="3.40.50.1260">
    <property type="entry name" value="Phosphoglycerate kinase, N-terminal domain"/>
    <property type="match status" value="2"/>
</dbReference>
<dbReference type="HAMAP" id="MF_00145">
    <property type="entry name" value="Phosphoglyc_kinase"/>
    <property type="match status" value="1"/>
</dbReference>
<dbReference type="InterPro" id="IPR001576">
    <property type="entry name" value="Phosphoglycerate_kinase"/>
</dbReference>
<dbReference type="InterPro" id="IPR015911">
    <property type="entry name" value="Phosphoglycerate_kinase_CS"/>
</dbReference>
<dbReference type="InterPro" id="IPR015824">
    <property type="entry name" value="Phosphoglycerate_kinase_N"/>
</dbReference>
<dbReference type="InterPro" id="IPR036043">
    <property type="entry name" value="Phosphoglycerate_kinase_sf"/>
</dbReference>
<dbReference type="PANTHER" id="PTHR11406">
    <property type="entry name" value="PHOSPHOGLYCERATE KINASE"/>
    <property type="match status" value="1"/>
</dbReference>
<dbReference type="PANTHER" id="PTHR11406:SF23">
    <property type="entry name" value="PHOSPHOGLYCERATE KINASE 1, CHLOROPLASTIC-RELATED"/>
    <property type="match status" value="1"/>
</dbReference>
<dbReference type="Pfam" id="PF00162">
    <property type="entry name" value="PGK"/>
    <property type="match status" value="1"/>
</dbReference>
<dbReference type="PIRSF" id="PIRSF000724">
    <property type="entry name" value="Pgk"/>
    <property type="match status" value="1"/>
</dbReference>
<dbReference type="PRINTS" id="PR00477">
    <property type="entry name" value="PHGLYCKINASE"/>
</dbReference>
<dbReference type="SUPFAM" id="SSF53748">
    <property type="entry name" value="Phosphoglycerate kinase"/>
    <property type="match status" value="1"/>
</dbReference>
<dbReference type="PROSITE" id="PS00111">
    <property type="entry name" value="PGLYCERATE_KINASE"/>
    <property type="match status" value="1"/>
</dbReference>
<keyword id="KW-0067">ATP-binding</keyword>
<keyword id="KW-0963">Cytoplasm</keyword>
<keyword id="KW-0324">Glycolysis</keyword>
<keyword id="KW-0418">Kinase</keyword>
<keyword id="KW-0547">Nucleotide-binding</keyword>
<keyword id="KW-0808">Transferase</keyword>
<organism>
    <name type="scientific">Yersinia enterocolitica serotype O:8 / biotype 1B (strain NCTC 13174 / 8081)</name>
    <dbReference type="NCBI Taxonomy" id="393305"/>
    <lineage>
        <taxon>Bacteria</taxon>
        <taxon>Pseudomonadati</taxon>
        <taxon>Pseudomonadota</taxon>
        <taxon>Gammaproteobacteria</taxon>
        <taxon>Enterobacterales</taxon>
        <taxon>Yersiniaceae</taxon>
        <taxon>Yersinia</taxon>
    </lineage>
</organism>
<protein>
    <recommendedName>
        <fullName evidence="1">Phosphoglycerate kinase</fullName>
        <ecNumber evidence="1">2.7.2.3</ecNumber>
    </recommendedName>
</protein>
<sequence>MSVIKMTDLDLAGKRVLIRADLNVPVKDGKVTSDARIRASLPTIETALKQGAKVMVTSHLGRPTEGEYNEEFSLLPVVNYLKDKLSAPVRLAKDYLDGVEIAAGELVVLENVRFNKGEKKDDETLSKKYAALCDVYVMDAFGTAHRAQASTHGVGKFAPIACAGPLLSAELEALGKALGNPARPMVAIVGGSKVSTKLTVLGALSKIADQLIVGGGIANTFVAAQGNNVGKSLYEADLIPEAKRLLETCDIPVPTDVRVATEFSETATATLKPANQIKDDEQILDLGDESAERLAEILKNAKTILWNGPVGVFEFPNFRKGTEIVARAIAESEAFSIAGGGDTLAAIDLFGIADQISYISTGGGAFLEFVEGKKLPAVVMLEERAKQ</sequence>